<evidence type="ECO:0000269" key="1">
    <source>
    </source>
</evidence>
<evidence type="ECO:0000305" key="2"/>
<feature type="peptide" id="PRO_0000043665" description="CalliFMRFamide-3">
    <location>
        <begin position="1"/>
        <end position="9"/>
    </location>
</feature>
<feature type="modified residue" description="Phenylalanine amide" evidence="1">
    <location>
        <position position="9"/>
    </location>
</feature>
<name>FAR3_CALVO</name>
<organism>
    <name type="scientific">Calliphora vomitoria</name>
    <name type="common">Blue bottle fly</name>
    <name type="synonym">Musca vomitoria</name>
    <dbReference type="NCBI Taxonomy" id="27454"/>
    <lineage>
        <taxon>Eukaryota</taxon>
        <taxon>Metazoa</taxon>
        <taxon>Ecdysozoa</taxon>
        <taxon>Arthropoda</taxon>
        <taxon>Hexapoda</taxon>
        <taxon>Insecta</taxon>
        <taxon>Pterygota</taxon>
        <taxon>Neoptera</taxon>
        <taxon>Endopterygota</taxon>
        <taxon>Diptera</taxon>
        <taxon>Brachycera</taxon>
        <taxon>Muscomorpha</taxon>
        <taxon>Oestroidea</taxon>
        <taxon>Calliphoridae</taxon>
        <taxon>Calliphorinae</taxon>
        <taxon>Calliphora</taxon>
    </lineage>
</organism>
<sequence>SPSQDFMRF</sequence>
<proteinExistence type="evidence at protein level"/>
<dbReference type="PIR" id="C41978">
    <property type="entry name" value="C41978"/>
</dbReference>
<dbReference type="GO" id="GO:0005576">
    <property type="term" value="C:extracellular region"/>
    <property type="evidence" value="ECO:0007669"/>
    <property type="project" value="UniProtKB-SubCell"/>
</dbReference>
<dbReference type="GO" id="GO:0007218">
    <property type="term" value="P:neuropeptide signaling pathway"/>
    <property type="evidence" value="ECO:0007669"/>
    <property type="project" value="UniProtKB-KW"/>
</dbReference>
<keyword id="KW-0027">Amidation</keyword>
<keyword id="KW-0903">Direct protein sequencing</keyword>
<keyword id="KW-0527">Neuropeptide</keyword>
<keyword id="KW-0964">Secreted</keyword>
<accession>P41858</accession>
<reference key="1">
    <citation type="journal article" date="1992" name="Proc. Natl. Acad. Sci. U.S.A.">
        <title>Isolation, structure, and activity of -Phe-Met-Arg-Phe-NH2 neuropeptides (designated calliFMRFamides) from the blowfly Calliphora vomitoria.</title>
        <authorList>
            <person name="Duve H."/>
            <person name="Johnsen A.H."/>
            <person name="Sewell J.C."/>
            <person name="Scott A.G."/>
            <person name="Orchard I."/>
            <person name="Rehfeld J.F."/>
            <person name="Thorpe A."/>
        </authorList>
    </citation>
    <scope>PROTEIN SEQUENCE</scope>
    <scope>AMIDATION AT PHE-9</scope>
    <source>
        <tissue>Thoracic ganglion</tissue>
    </source>
</reference>
<comment type="function">
    <text>Able to induce fluid secretion from the isolated salivary gland of Calliphora.</text>
</comment>
<comment type="subcellular location">
    <subcellularLocation>
        <location>Secreted</location>
    </subcellularLocation>
</comment>
<comment type="similarity">
    <text evidence="2">Belongs to the FARP (FMRFamide related peptide) family.</text>
</comment>
<protein>
    <recommendedName>
        <fullName>CalliFMRFamide-3</fullName>
    </recommendedName>
</protein>